<feature type="chain" id="PRO_1000189651" description="ATP-dependent Clp protease proteolytic subunit">
    <location>
        <begin position="1"/>
        <end position="196"/>
    </location>
</feature>
<feature type="active site" description="Nucleophile" evidence="1">
    <location>
        <position position="98"/>
    </location>
</feature>
<feature type="active site" evidence="1">
    <location>
        <position position="123"/>
    </location>
</feature>
<sequence length="196" mass="21480">MNLVPTVIEQSSRGERAYDIYSRLLKDRIIMLSGPIEDNMANSIVAQLLFLDAQDSTKDIYLYINSPGGVVTSGMAIYDTMNFIKSDVQTIVIGMAASMASVLVSSGTKGKRFGLPHSTVMIHQPSGGAQGQQTEIQIAAEEILKTRKMINEILAKNSGQSFEQVEQDTERDHYLTAQEAVDYGLLDGVMDSNNLK</sequence>
<accession>B2GAL4</accession>
<gene>
    <name evidence="1" type="primary">clpP</name>
    <name type="ordered locus">LAF_0360</name>
</gene>
<proteinExistence type="inferred from homology"/>
<organism>
    <name type="scientific">Limosilactobacillus fermentum (strain NBRC 3956 / LMG 18251)</name>
    <name type="common">Lactobacillus fermentum</name>
    <dbReference type="NCBI Taxonomy" id="334390"/>
    <lineage>
        <taxon>Bacteria</taxon>
        <taxon>Bacillati</taxon>
        <taxon>Bacillota</taxon>
        <taxon>Bacilli</taxon>
        <taxon>Lactobacillales</taxon>
        <taxon>Lactobacillaceae</taxon>
        <taxon>Limosilactobacillus</taxon>
    </lineage>
</organism>
<keyword id="KW-0963">Cytoplasm</keyword>
<keyword id="KW-0378">Hydrolase</keyword>
<keyword id="KW-0645">Protease</keyword>
<keyword id="KW-1185">Reference proteome</keyword>
<keyword id="KW-0720">Serine protease</keyword>
<reference key="1">
    <citation type="journal article" date="2008" name="DNA Res.">
        <title>Comparative genome analysis of Lactobacillus reuteri and Lactobacillus fermentum reveal a genomic island for reuterin and cobalamin production.</title>
        <authorList>
            <person name="Morita H."/>
            <person name="Toh H."/>
            <person name="Fukuda S."/>
            <person name="Horikawa H."/>
            <person name="Oshima K."/>
            <person name="Suzuki T."/>
            <person name="Murakami M."/>
            <person name="Hisamatsu S."/>
            <person name="Kato Y."/>
            <person name="Takizawa T."/>
            <person name="Fukuoka H."/>
            <person name="Yoshimura T."/>
            <person name="Itoh K."/>
            <person name="O'Sullivan D.J."/>
            <person name="McKay L.L."/>
            <person name="Ohno H."/>
            <person name="Kikuchi J."/>
            <person name="Masaoka T."/>
            <person name="Hattori M."/>
        </authorList>
    </citation>
    <scope>NUCLEOTIDE SEQUENCE [LARGE SCALE GENOMIC DNA]</scope>
    <source>
        <strain>NBRC 3956 / LMG 18251</strain>
    </source>
</reference>
<evidence type="ECO:0000255" key="1">
    <source>
        <dbReference type="HAMAP-Rule" id="MF_00444"/>
    </source>
</evidence>
<protein>
    <recommendedName>
        <fullName evidence="1">ATP-dependent Clp protease proteolytic subunit</fullName>
        <ecNumber evidence="1">3.4.21.92</ecNumber>
    </recommendedName>
    <alternativeName>
        <fullName evidence="1">Endopeptidase Clp</fullName>
    </alternativeName>
</protein>
<comment type="function">
    <text evidence="1">Cleaves peptides in various proteins in a process that requires ATP hydrolysis. Has a chymotrypsin-like activity. Plays a major role in the degradation of misfolded proteins.</text>
</comment>
<comment type="catalytic activity">
    <reaction evidence="1">
        <text>Hydrolysis of proteins to small peptides in the presence of ATP and magnesium. alpha-casein is the usual test substrate. In the absence of ATP, only oligopeptides shorter than five residues are hydrolyzed (such as succinyl-Leu-Tyr-|-NHMec, and Leu-Tyr-Leu-|-Tyr-Trp, in which cleavage of the -Tyr-|-Leu- and -Tyr-|-Trp bonds also occurs).</text>
        <dbReference type="EC" id="3.4.21.92"/>
    </reaction>
</comment>
<comment type="subunit">
    <text evidence="1">Fourteen ClpP subunits assemble into 2 heptameric rings which stack back to back to give a disk-like structure with a central cavity, resembling the structure of eukaryotic proteasomes.</text>
</comment>
<comment type="subcellular location">
    <subcellularLocation>
        <location evidence="1">Cytoplasm</location>
    </subcellularLocation>
</comment>
<comment type="similarity">
    <text evidence="1">Belongs to the peptidase S14 family.</text>
</comment>
<name>CLPP_LIMF3</name>
<dbReference type="EC" id="3.4.21.92" evidence="1"/>
<dbReference type="EMBL" id="AP008937">
    <property type="protein sequence ID" value="BAG26696.1"/>
    <property type="molecule type" value="Genomic_DNA"/>
</dbReference>
<dbReference type="RefSeq" id="WP_003682627.1">
    <property type="nucleotide sequence ID" value="NC_010610.1"/>
</dbReference>
<dbReference type="SMR" id="B2GAL4"/>
<dbReference type="MEROPS" id="S14.001"/>
<dbReference type="GeneID" id="83715313"/>
<dbReference type="KEGG" id="lfe:LAF_0360"/>
<dbReference type="eggNOG" id="COG0740">
    <property type="taxonomic scope" value="Bacteria"/>
</dbReference>
<dbReference type="HOGENOM" id="CLU_058707_3_2_9"/>
<dbReference type="Proteomes" id="UP000001697">
    <property type="component" value="Chromosome"/>
</dbReference>
<dbReference type="GO" id="GO:0005737">
    <property type="term" value="C:cytoplasm"/>
    <property type="evidence" value="ECO:0007669"/>
    <property type="project" value="UniProtKB-SubCell"/>
</dbReference>
<dbReference type="GO" id="GO:0009368">
    <property type="term" value="C:endopeptidase Clp complex"/>
    <property type="evidence" value="ECO:0007669"/>
    <property type="project" value="TreeGrafter"/>
</dbReference>
<dbReference type="GO" id="GO:0004176">
    <property type="term" value="F:ATP-dependent peptidase activity"/>
    <property type="evidence" value="ECO:0007669"/>
    <property type="project" value="InterPro"/>
</dbReference>
<dbReference type="GO" id="GO:0051117">
    <property type="term" value="F:ATPase binding"/>
    <property type="evidence" value="ECO:0007669"/>
    <property type="project" value="TreeGrafter"/>
</dbReference>
<dbReference type="GO" id="GO:0004252">
    <property type="term" value="F:serine-type endopeptidase activity"/>
    <property type="evidence" value="ECO:0007669"/>
    <property type="project" value="UniProtKB-UniRule"/>
</dbReference>
<dbReference type="GO" id="GO:0006515">
    <property type="term" value="P:protein quality control for misfolded or incompletely synthesized proteins"/>
    <property type="evidence" value="ECO:0007669"/>
    <property type="project" value="TreeGrafter"/>
</dbReference>
<dbReference type="CDD" id="cd07017">
    <property type="entry name" value="S14_ClpP_2"/>
    <property type="match status" value="1"/>
</dbReference>
<dbReference type="FunFam" id="3.90.226.10:FF:000001">
    <property type="entry name" value="ATP-dependent Clp protease proteolytic subunit"/>
    <property type="match status" value="1"/>
</dbReference>
<dbReference type="Gene3D" id="3.90.226.10">
    <property type="entry name" value="2-enoyl-CoA Hydratase, Chain A, domain 1"/>
    <property type="match status" value="1"/>
</dbReference>
<dbReference type="HAMAP" id="MF_00444">
    <property type="entry name" value="ClpP"/>
    <property type="match status" value="1"/>
</dbReference>
<dbReference type="InterPro" id="IPR001907">
    <property type="entry name" value="ClpP"/>
</dbReference>
<dbReference type="InterPro" id="IPR029045">
    <property type="entry name" value="ClpP/crotonase-like_dom_sf"/>
</dbReference>
<dbReference type="InterPro" id="IPR023562">
    <property type="entry name" value="ClpP/TepA"/>
</dbReference>
<dbReference type="InterPro" id="IPR033135">
    <property type="entry name" value="ClpP_His_AS"/>
</dbReference>
<dbReference type="InterPro" id="IPR018215">
    <property type="entry name" value="ClpP_Ser_AS"/>
</dbReference>
<dbReference type="NCBIfam" id="TIGR00493">
    <property type="entry name" value="clpP"/>
    <property type="match status" value="1"/>
</dbReference>
<dbReference type="NCBIfam" id="NF001368">
    <property type="entry name" value="PRK00277.1"/>
    <property type="match status" value="1"/>
</dbReference>
<dbReference type="NCBIfam" id="NF009205">
    <property type="entry name" value="PRK12553.1"/>
    <property type="match status" value="1"/>
</dbReference>
<dbReference type="PANTHER" id="PTHR10381">
    <property type="entry name" value="ATP-DEPENDENT CLP PROTEASE PROTEOLYTIC SUBUNIT"/>
    <property type="match status" value="1"/>
</dbReference>
<dbReference type="PANTHER" id="PTHR10381:SF70">
    <property type="entry name" value="ATP-DEPENDENT CLP PROTEASE PROTEOLYTIC SUBUNIT"/>
    <property type="match status" value="1"/>
</dbReference>
<dbReference type="Pfam" id="PF00574">
    <property type="entry name" value="CLP_protease"/>
    <property type="match status" value="1"/>
</dbReference>
<dbReference type="PRINTS" id="PR00127">
    <property type="entry name" value="CLPPROTEASEP"/>
</dbReference>
<dbReference type="SUPFAM" id="SSF52096">
    <property type="entry name" value="ClpP/crotonase"/>
    <property type="match status" value="1"/>
</dbReference>
<dbReference type="PROSITE" id="PS00382">
    <property type="entry name" value="CLP_PROTEASE_HIS"/>
    <property type="match status" value="1"/>
</dbReference>
<dbReference type="PROSITE" id="PS00381">
    <property type="entry name" value="CLP_PROTEASE_SER"/>
    <property type="match status" value="1"/>
</dbReference>